<name>PTH_SACI3</name>
<sequence length="120" mass="13147">MVKMVIVVRSDIKMGKGKMAAQVAHAAVTLVISIINSNNSRWKEWLNEWLQQGQPKIVVKANSLDEIILRSKKAETMNLPFSIIEDAGKTQLEPGTITCLGIGPAPENLIDPITGDLKLL</sequence>
<gene>
    <name evidence="1" type="primary">pth</name>
    <name type="ordered locus">M1627_2040</name>
</gene>
<organism>
    <name type="scientific">Saccharolobus islandicus (strain M.16.27)</name>
    <name type="common">Sulfolobus islandicus</name>
    <dbReference type="NCBI Taxonomy" id="427318"/>
    <lineage>
        <taxon>Archaea</taxon>
        <taxon>Thermoproteota</taxon>
        <taxon>Thermoprotei</taxon>
        <taxon>Sulfolobales</taxon>
        <taxon>Sulfolobaceae</taxon>
        <taxon>Saccharolobus</taxon>
    </lineage>
</organism>
<evidence type="ECO:0000255" key="1">
    <source>
        <dbReference type="HAMAP-Rule" id="MF_00628"/>
    </source>
</evidence>
<feature type="chain" id="PRO_1000212314" description="Peptidyl-tRNA hydrolase">
    <location>
        <begin position="1"/>
        <end position="120"/>
    </location>
</feature>
<protein>
    <recommendedName>
        <fullName evidence="1">Peptidyl-tRNA hydrolase</fullName>
        <shortName evidence="1">PTH</shortName>
        <ecNumber evidence="1">3.1.1.29</ecNumber>
    </recommendedName>
</protein>
<proteinExistence type="inferred from homology"/>
<comment type="function">
    <text evidence="1">The natural substrate for this enzyme may be peptidyl-tRNAs which drop off the ribosome during protein synthesis.</text>
</comment>
<comment type="catalytic activity">
    <reaction evidence="1">
        <text>an N-acyl-L-alpha-aminoacyl-tRNA + H2O = an N-acyl-L-amino acid + a tRNA + H(+)</text>
        <dbReference type="Rhea" id="RHEA:54448"/>
        <dbReference type="Rhea" id="RHEA-COMP:10123"/>
        <dbReference type="Rhea" id="RHEA-COMP:13883"/>
        <dbReference type="ChEBI" id="CHEBI:15377"/>
        <dbReference type="ChEBI" id="CHEBI:15378"/>
        <dbReference type="ChEBI" id="CHEBI:59874"/>
        <dbReference type="ChEBI" id="CHEBI:78442"/>
        <dbReference type="ChEBI" id="CHEBI:138191"/>
        <dbReference type="EC" id="3.1.1.29"/>
    </reaction>
</comment>
<comment type="subcellular location">
    <subcellularLocation>
        <location evidence="1">Cytoplasm</location>
    </subcellularLocation>
</comment>
<comment type="similarity">
    <text evidence="1">Belongs to the PTH2 family.</text>
</comment>
<reference key="1">
    <citation type="journal article" date="2009" name="Proc. Natl. Acad. Sci. U.S.A.">
        <title>Biogeography of the Sulfolobus islandicus pan-genome.</title>
        <authorList>
            <person name="Reno M.L."/>
            <person name="Held N.L."/>
            <person name="Fields C.J."/>
            <person name="Burke P.V."/>
            <person name="Whitaker R.J."/>
        </authorList>
    </citation>
    <scope>NUCLEOTIDE SEQUENCE [LARGE SCALE GENOMIC DNA]</scope>
    <source>
        <strain>M.16.27</strain>
    </source>
</reference>
<accession>C3MZS7</accession>
<keyword id="KW-0963">Cytoplasm</keyword>
<keyword id="KW-0378">Hydrolase</keyword>
<dbReference type="EC" id="3.1.1.29" evidence="1"/>
<dbReference type="EMBL" id="CP001401">
    <property type="protein sequence ID" value="ACP55909.1"/>
    <property type="molecule type" value="Genomic_DNA"/>
</dbReference>
<dbReference type="SMR" id="C3MZS7"/>
<dbReference type="KEGG" id="sim:M1627_2040"/>
<dbReference type="HOGENOM" id="CLU_073661_2_2_2"/>
<dbReference type="Proteomes" id="UP000002307">
    <property type="component" value="Chromosome"/>
</dbReference>
<dbReference type="GO" id="GO:0005829">
    <property type="term" value="C:cytosol"/>
    <property type="evidence" value="ECO:0007669"/>
    <property type="project" value="TreeGrafter"/>
</dbReference>
<dbReference type="GO" id="GO:0004045">
    <property type="term" value="F:peptidyl-tRNA hydrolase activity"/>
    <property type="evidence" value="ECO:0007669"/>
    <property type="project" value="UniProtKB-UniRule"/>
</dbReference>
<dbReference type="GO" id="GO:0006412">
    <property type="term" value="P:translation"/>
    <property type="evidence" value="ECO:0007669"/>
    <property type="project" value="UniProtKB-UniRule"/>
</dbReference>
<dbReference type="CDD" id="cd02430">
    <property type="entry name" value="PTH2"/>
    <property type="match status" value="1"/>
</dbReference>
<dbReference type="FunFam" id="3.40.1490.10:FF:000001">
    <property type="entry name" value="Peptidyl-tRNA hydrolase 2"/>
    <property type="match status" value="1"/>
</dbReference>
<dbReference type="Gene3D" id="3.40.1490.10">
    <property type="entry name" value="Bit1"/>
    <property type="match status" value="1"/>
</dbReference>
<dbReference type="HAMAP" id="MF_00628">
    <property type="entry name" value="Pept_tRNA_hydro_arch"/>
    <property type="match status" value="1"/>
</dbReference>
<dbReference type="InterPro" id="IPR023476">
    <property type="entry name" value="Pep_tRNA_hydro_II_dom_sf"/>
</dbReference>
<dbReference type="InterPro" id="IPR034759">
    <property type="entry name" value="Pept_tRNA_hydro_arch"/>
</dbReference>
<dbReference type="InterPro" id="IPR002833">
    <property type="entry name" value="PTH2"/>
</dbReference>
<dbReference type="NCBIfam" id="TIGR00283">
    <property type="entry name" value="arch_pth2"/>
    <property type="match status" value="1"/>
</dbReference>
<dbReference type="NCBIfam" id="NF003314">
    <property type="entry name" value="PRK04322.1"/>
    <property type="match status" value="1"/>
</dbReference>
<dbReference type="PANTHER" id="PTHR12649">
    <property type="entry name" value="PEPTIDYL-TRNA HYDROLASE 2"/>
    <property type="match status" value="1"/>
</dbReference>
<dbReference type="PANTHER" id="PTHR12649:SF11">
    <property type="entry name" value="PEPTIDYL-TRNA HYDROLASE 2, MITOCHONDRIAL"/>
    <property type="match status" value="1"/>
</dbReference>
<dbReference type="Pfam" id="PF01981">
    <property type="entry name" value="PTH2"/>
    <property type="match status" value="1"/>
</dbReference>
<dbReference type="SUPFAM" id="SSF102462">
    <property type="entry name" value="Peptidyl-tRNA hydrolase II"/>
    <property type="match status" value="1"/>
</dbReference>